<feature type="chain" id="PRO_0000462085" description="Rod-determining factor A">
    <location>
        <begin position="1"/>
        <end position="215"/>
    </location>
</feature>
<sequence length="215" mass="24203">MRDSGRSVSRRGGRGPKIERIANRYGLDGLGDDLVDAWLGDGRAQRSLRELEGDVNKRLIRAALDEAGAHVLDGEAENFYRLLTGDDVTAGSRTDARNTLRERGVDVEQLEADIISYQSVYNYLKRHRNVEREDDDDDETDATEAGLATIRKLRSRLRTVTIDVVDRLVKAERVFIGAYEVEVDIRVTCTDCDTRMTPTALLSSGHCDCERERDE</sequence>
<dbReference type="EMBL" id="CP001956">
    <property type="protein sequence ID" value="ADE04755.1"/>
    <property type="molecule type" value="Genomic_DNA"/>
</dbReference>
<dbReference type="RefSeq" id="WP_004042066.1">
    <property type="nucleotide sequence ID" value="NC_013967.1"/>
</dbReference>
<dbReference type="STRING" id="309800.HVO_2174"/>
<dbReference type="PaxDb" id="309800-C498_06163"/>
<dbReference type="EnsemblBacteria" id="ADE04755">
    <property type="protein sequence ID" value="ADE04755"/>
    <property type="gene ID" value="HVO_2174"/>
</dbReference>
<dbReference type="GeneID" id="8925646"/>
<dbReference type="KEGG" id="hvo:HVO_2174"/>
<dbReference type="PATRIC" id="fig|309800.29.peg.1201"/>
<dbReference type="eggNOG" id="arCOG02804">
    <property type="taxonomic scope" value="Archaea"/>
</dbReference>
<dbReference type="HOGENOM" id="CLU_099321_0_0_2"/>
<dbReference type="OrthoDB" id="304916at2157"/>
<dbReference type="Proteomes" id="UP000008243">
    <property type="component" value="Chromosome"/>
</dbReference>
<dbReference type="InterPro" id="IPR048925">
    <property type="entry name" value="RdfA"/>
</dbReference>
<dbReference type="Pfam" id="PF21811">
    <property type="entry name" value="RdfA"/>
    <property type="match status" value="1"/>
</dbReference>
<evidence type="ECO:0000269" key="1">
    <source>
    </source>
</evidence>
<evidence type="ECO:0000303" key="2">
    <source>
    </source>
</evidence>
<evidence type="ECO:0000312" key="3">
    <source>
        <dbReference type="EMBL" id="ADE04755.1"/>
    </source>
</evidence>
<accession>D4GVA7</accession>
<accession>L9VAJ9</accession>
<keyword id="KW-0133">Cell shape</keyword>
<keyword id="KW-1185">Reference proteome</keyword>
<protein>
    <recommendedName>
        <fullName evidence="2">Rod-determining factor A</fullName>
    </recommendedName>
</protein>
<reference key="1">
    <citation type="journal article" date="2010" name="PLoS ONE">
        <title>The complete genome sequence of Haloferax volcanii DS2, a model archaeon.</title>
        <authorList>
            <person name="Hartman A.L."/>
            <person name="Norais C."/>
            <person name="Badger J.H."/>
            <person name="Delmas S."/>
            <person name="Haldenby S."/>
            <person name="Madupu R."/>
            <person name="Robinson J."/>
            <person name="Khouri H."/>
            <person name="Ren Q."/>
            <person name="Lowe T.M."/>
            <person name="Maupin-Furlow J."/>
            <person name="Pohlschroder M."/>
            <person name="Daniels C."/>
            <person name="Pfeiffer F."/>
            <person name="Allers T."/>
            <person name="Eisen J.A."/>
        </authorList>
    </citation>
    <scope>NUCLEOTIDE SEQUENCE [LARGE SCALE GENOMIC DNA]</scope>
    <source>
        <strain>ATCC 29605 / DSM 3757 / JCM 8879 / NBRC 14742 / NCIMB 2012 / VKM B-1768 / DS2</strain>
    </source>
</reference>
<reference key="2">
    <citation type="journal article" date="2024" name="Nat. Commun.">
        <title>Identification of structural and regulatory cell-shape determinants in Haloferax volcanii.</title>
        <authorList>
            <person name="Schiller H."/>
            <person name="Hong Y."/>
            <person name="Kouassi J."/>
            <person name="Rados T."/>
            <person name="Kwak J."/>
            <person name="DiLucido A."/>
            <person name="Safer D."/>
            <person name="Marchfelder A."/>
            <person name="Pfeiffer F."/>
            <person name="Bisson A."/>
            <person name="Schulze S."/>
            <person name="Pohlschroder M."/>
        </authorList>
    </citation>
    <scope>FUNCTION IN CELL-SHAPE DETERMINATION</scope>
    <scope>DISRUPTION PHENOTYPE</scope>
    <source>
        <strain>H53</strain>
    </source>
</reference>
<name>RDFA_HALVD</name>
<proteinExistence type="evidence at protein level"/>
<gene>
    <name evidence="2" type="primary">rdfA</name>
    <name evidence="3" type="ordered locus">HVO_2174</name>
</gene>
<comment type="function">
    <text evidence="1">Involved in cell-shape determination (PubMed:38360755). Required for the formation of rods and wild-type-like motility (PubMed:38360755).</text>
</comment>
<comment type="disruption phenotype">
    <text evidence="1">The deletion mutant forms only disks across all growth phases and is non-motile.</text>
</comment>
<organism>
    <name type="scientific">Haloferax volcanii (strain ATCC 29605 / DSM 3757 / JCM 8879 / NBRC 14742 / NCIMB 2012 / VKM B-1768 / DS2)</name>
    <name type="common">Halobacterium volcanii</name>
    <dbReference type="NCBI Taxonomy" id="309800"/>
    <lineage>
        <taxon>Archaea</taxon>
        <taxon>Methanobacteriati</taxon>
        <taxon>Methanobacteriota</taxon>
        <taxon>Stenosarchaea group</taxon>
        <taxon>Halobacteria</taxon>
        <taxon>Halobacteriales</taxon>
        <taxon>Haloferacaceae</taxon>
        <taxon>Haloferax</taxon>
    </lineage>
</organism>